<reference key="1">
    <citation type="journal article" date="2009" name="Stand. Genomic Sci.">
        <title>Complete genome sequence of Actinosynnema mirum type strain (101).</title>
        <authorList>
            <person name="Land M."/>
            <person name="Lapidus A."/>
            <person name="Mayilraj S."/>
            <person name="Chen F."/>
            <person name="Copeland A."/>
            <person name="Del Rio T.G."/>
            <person name="Nolan M."/>
            <person name="Lucas S."/>
            <person name="Tice H."/>
            <person name="Cheng J.F."/>
            <person name="Chertkov O."/>
            <person name="Bruce D."/>
            <person name="Goodwin L."/>
            <person name="Pitluck S."/>
            <person name="Rohde M."/>
            <person name="Goker M."/>
            <person name="Pati A."/>
            <person name="Ivanova N."/>
            <person name="Mavromatis K."/>
            <person name="Chen A."/>
            <person name="Palaniappan K."/>
            <person name="Hauser L."/>
            <person name="Chang Y.J."/>
            <person name="Jeffries C.C."/>
            <person name="Brettin T."/>
            <person name="Detter J.C."/>
            <person name="Han C."/>
            <person name="Chain P."/>
            <person name="Tindall B.J."/>
            <person name="Bristow J."/>
            <person name="Eisen J.A."/>
            <person name="Markowitz V."/>
            <person name="Hugenholtz P."/>
            <person name="Kyrpides N.C."/>
            <person name="Klenk H.P."/>
        </authorList>
    </citation>
    <scope>NUCLEOTIDE SEQUENCE [LARGE SCALE GENOMIC DNA]</scope>
    <source>
        <strain>ATCC 29888 / DSM 43827 / JCM 3225 / NBRC 14064 / NCIMB 13271 / NRRL B-12336 / IMRU 3971 / 101</strain>
    </source>
</reference>
<comment type="function">
    <text evidence="1">ATPase which is responsible for recognizing, binding, unfolding and translocation of pupylated proteins into the bacterial 20S proteasome core particle. May be essential for opening the gate of the 20S proteasome via an interaction with its C-terminus, thereby allowing substrate entry and access to the site of proteolysis. Thus, the C-termini of the proteasomal ATPase may function like a 'key in a lock' to induce gate opening and therefore regulate proteolysis.</text>
</comment>
<comment type="pathway">
    <text evidence="1">Protein degradation; proteasomal Pup-dependent pathway.</text>
</comment>
<comment type="subunit">
    <text evidence="1">Homohexamer. Assembles into a hexameric ring structure that caps the 20S proteasome core. Strongly interacts with the prokaryotic ubiquitin-like protein Pup through a hydrophobic interface; the interacting region of ARC lies in its N-terminal coiled-coil domain. There is one Pup binding site per ARC hexamer ring. Upon ATP-binding, the C-terminus of ARC interacts with the alpha-rings of the proteasome core, possibly by binding to the intersubunit pockets.</text>
</comment>
<comment type="domain">
    <text evidence="1">Consists of three main regions, an N-terminal coiled-coil domain that binds to protein Pup and functions as a docking station, an interdomain involved in ARC hexamerization, and a C-terminal ATPase domain of the AAA type.</text>
</comment>
<comment type="similarity">
    <text evidence="1">Belongs to the AAA ATPase family.</text>
</comment>
<evidence type="ECO:0000255" key="1">
    <source>
        <dbReference type="HAMAP-Rule" id="MF_02112"/>
    </source>
</evidence>
<evidence type="ECO:0000256" key="2">
    <source>
        <dbReference type="SAM" id="MobiDB-lite"/>
    </source>
</evidence>
<organism>
    <name type="scientific">Actinosynnema mirum (strain ATCC 29888 / DSM 43827 / JCM 3225 / NBRC 14064 / NCIMB 13271 / NRRL B-12336 / IMRU 3971 / 101)</name>
    <dbReference type="NCBI Taxonomy" id="446462"/>
    <lineage>
        <taxon>Bacteria</taxon>
        <taxon>Bacillati</taxon>
        <taxon>Actinomycetota</taxon>
        <taxon>Actinomycetes</taxon>
        <taxon>Pseudonocardiales</taxon>
        <taxon>Pseudonocardiaceae</taxon>
        <taxon>Actinosynnema</taxon>
    </lineage>
</organism>
<dbReference type="EMBL" id="CP001630">
    <property type="protein sequence ID" value="ACU36171.1"/>
    <property type="molecule type" value="Genomic_DNA"/>
</dbReference>
<dbReference type="RefSeq" id="WP_015801060.1">
    <property type="nucleotide sequence ID" value="NC_013093.1"/>
</dbReference>
<dbReference type="SMR" id="C6WIC8"/>
<dbReference type="STRING" id="446462.Amir_2231"/>
<dbReference type="KEGG" id="ami:Amir_2231"/>
<dbReference type="eggNOG" id="COG1222">
    <property type="taxonomic scope" value="Bacteria"/>
</dbReference>
<dbReference type="HOGENOM" id="CLU_036054_0_0_11"/>
<dbReference type="OrthoDB" id="9809379at2"/>
<dbReference type="UniPathway" id="UPA00997"/>
<dbReference type="Proteomes" id="UP000002213">
    <property type="component" value="Chromosome"/>
</dbReference>
<dbReference type="GO" id="GO:0000502">
    <property type="term" value="C:proteasome complex"/>
    <property type="evidence" value="ECO:0007669"/>
    <property type="project" value="UniProtKB-KW"/>
</dbReference>
<dbReference type="GO" id="GO:0005524">
    <property type="term" value="F:ATP binding"/>
    <property type="evidence" value="ECO:0007669"/>
    <property type="project" value="UniProtKB-UniRule"/>
</dbReference>
<dbReference type="GO" id="GO:0016887">
    <property type="term" value="F:ATP hydrolysis activity"/>
    <property type="evidence" value="ECO:0007669"/>
    <property type="project" value="UniProtKB-UniRule"/>
</dbReference>
<dbReference type="GO" id="GO:0019941">
    <property type="term" value="P:modification-dependent protein catabolic process"/>
    <property type="evidence" value="ECO:0007669"/>
    <property type="project" value="InterPro"/>
</dbReference>
<dbReference type="GO" id="GO:0010498">
    <property type="term" value="P:proteasomal protein catabolic process"/>
    <property type="evidence" value="ECO:0007669"/>
    <property type="project" value="InterPro"/>
</dbReference>
<dbReference type="FunFam" id="3.40.50.300:FF:000155">
    <property type="entry name" value="AAA ATPase forming ring-shaped complexes"/>
    <property type="match status" value="1"/>
</dbReference>
<dbReference type="Gene3D" id="1.10.8.60">
    <property type="match status" value="1"/>
</dbReference>
<dbReference type="Gene3D" id="1.20.5.170">
    <property type="match status" value="1"/>
</dbReference>
<dbReference type="Gene3D" id="2.40.50.140">
    <property type="entry name" value="Nucleic acid-binding proteins"/>
    <property type="match status" value="2"/>
</dbReference>
<dbReference type="Gene3D" id="3.40.50.300">
    <property type="entry name" value="P-loop containing nucleotide triphosphate hydrolases"/>
    <property type="match status" value="1"/>
</dbReference>
<dbReference type="HAMAP" id="MF_02112">
    <property type="entry name" value="ARC_ATPase"/>
    <property type="match status" value="1"/>
</dbReference>
<dbReference type="InterPro" id="IPR003593">
    <property type="entry name" value="AAA+_ATPase"/>
</dbReference>
<dbReference type="InterPro" id="IPR050168">
    <property type="entry name" value="AAA_ATPase_domain"/>
</dbReference>
<dbReference type="InterPro" id="IPR003959">
    <property type="entry name" value="ATPase_AAA_core"/>
</dbReference>
<dbReference type="InterPro" id="IPR003960">
    <property type="entry name" value="ATPase_AAA_CS"/>
</dbReference>
<dbReference type="InterPro" id="IPR012340">
    <property type="entry name" value="NA-bd_OB-fold"/>
</dbReference>
<dbReference type="InterPro" id="IPR027417">
    <property type="entry name" value="P-loop_NTPase"/>
</dbReference>
<dbReference type="InterPro" id="IPR032501">
    <property type="entry name" value="Prot_ATP_ID_OB_2nd"/>
</dbReference>
<dbReference type="InterPro" id="IPR041626">
    <property type="entry name" value="Prot_ATP_ID_OB_N"/>
</dbReference>
<dbReference type="InterPro" id="IPR022482">
    <property type="entry name" value="Proteasome_ATPase"/>
</dbReference>
<dbReference type="NCBIfam" id="TIGR03689">
    <property type="entry name" value="pup_AAA"/>
    <property type="match status" value="1"/>
</dbReference>
<dbReference type="PANTHER" id="PTHR23077">
    <property type="entry name" value="AAA-FAMILY ATPASE"/>
    <property type="match status" value="1"/>
</dbReference>
<dbReference type="PANTHER" id="PTHR23077:SF144">
    <property type="entry name" value="PROTEASOME-ASSOCIATED ATPASE"/>
    <property type="match status" value="1"/>
</dbReference>
<dbReference type="Pfam" id="PF00004">
    <property type="entry name" value="AAA"/>
    <property type="match status" value="1"/>
</dbReference>
<dbReference type="Pfam" id="PF16450">
    <property type="entry name" value="Prot_ATP_ID_OB_C"/>
    <property type="match status" value="1"/>
</dbReference>
<dbReference type="Pfam" id="PF17758">
    <property type="entry name" value="Prot_ATP_ID_OB_N"/>
    <property type="match status" value="1"/>
</dbReference>
<dbReference type="SMART" id="SM00382">
    <property type="entry name" value="AAA"/>
    <property type="match status" value="1"/>
</dbReference>
<dbReference type="SUPFAM" id="SSF52540">
    <property type="entry name" value="P-loop containing nucleoside triphosphate hydrolases"/>
    <property type="match status" value="1"/>
</dbReference>
<dbReference type="PROSITE" id="PS00674">
    <property type="entry name" value="AAA"/>
    <property type="match status" value="1"/>
</dbReference>
<feature type="chain" id="PRO_0000396958" description="Proteasome-associated ATPase">
    <location>
        <begin position="1"/>
        <end position="599"/>
    </location>
</feature>
<feature type="region of interest" description="Disordered" evidence="2">
    <location>
        <begin position="1"/>
        <end position="22"/>
    </location>
</feature>
<feature type="region of interest" description="Docks into pockets in the proteasome alpha-ring" evidence="1">
    <location>
        <begin position="598"/>
        <end position="599"/>
    </location>
</feature>
<feature type="coiled-coil region" evidence="1">
    <location>
        <begin position="21"/>
        <end position="97"/>
    </location>
</feature>
<feature type="binding site" evidence="1">
    <location>
        <begin position="286"/>
        <end position="291"/>
    </location>
    <ligand>
        <name>ATP</name>
        <dbReference type="ChEBI" id="CHEBI:30616"/>
    </ligand>
</feature>
<sequence>MPHGHPGSQPDEGGELSNGSSSGELTAQIRFLEDEIALLRRKLTESPRHARLLEQRLAEATERVNQLTERNTKLIDTLREARGQLLALREEVDRLAQPPSGYGVFLARFEDGTVDVFTSGRRMRVSVSPSVETSSLVMGQSVRLNEALTVVEGGDFERTGEVCALREVLDDGGPEGSVARALVVGHADEERVVWLAQPLLDSPLKAGDSLLVDSKAGFAYERVPKAEVEDLVLEEVPDVRYEDIGGLSRQIEQIRDAVELPFLHADLFREYKLRPPKGVLLYGPPGCGKTLIAKAVANSLAKQVSKARGEDHKDAKSFFLNIKGPELLNKFVGETERHIRLIFQRAREKASEGTPVIVFFDEMDSIFRTRGSGVSSDVETTIVPQLLSEIDGVEGLENVIVIGASNREDMIDPAILRPGRLDVKIKIERPDAEGAKDIFAKYLTDDLPLHADDLTEFGGDPAACIQGMVQHTVERMYEETDENRFLEVTYANGDKEVLYFRDFNSGAMIQNIVDRAKKSAIKSLLDTKQPGLSVRHLMDAIVDEFAENEDLPNTTNPDDWARISGKKGERIVYIRTLVTGKNQETGRAIDTATNTGQYL</sequence>
<proteinExistence type="inferred from homology"/>
<protein>
    <recommendedName>
        <fullName evidence="1">Proteasome-associated ATPase</fullName>
    </recommendedName>
    <alternativeName>
        <fullName evidence="1">AAA ATPase forming ring-shaped complexes</fullName>
        <shortName evidence="1">ARC</shortName>
    </alternativeName>
    <alternativeName>
        <fullName evidence="1">Proteasomal ATPase</fullName>
    </alternativeName>
</protein>
<keyword id="KW-0067">ATP-binding</keyword>
<keyword id="KW-0143">Chaperone</keyword>
<keyword id="KW-0175">Coiled coil</keyword>
<keyword id="KW-0547">Nucleotide-binding</keyword>
<keyword id="KW-0647">Proteasome</keyword>
<keyword id="KW-1185">Reference proteome</keyword>
<name>ARC_ACTMD</name>
<accession>C6WIC8</accession>
<gene>
    <name evidence="1" type="primary">arc</name>
    <name type="ordered locus">Amir_2231</name>
</gene>